<keyword id="KW-1015">Disulfide bond</keyword>
<keyword id="KW-0325">Glycoprotein</keyword>
<keyword id="KW-1199">Hemostasis impairing toxin</keyword>
<keyword id="KW-0964">Secreted</keyword>
<keyword id="KW-0721">Serine protease homolog</keyword>
<keyword id="KW-0732">Signal</keyword>
<keyword id="KW-0800">Toxin</keyword>
<evidence type="ECO:0000250" key="1"/>
<evidence type="ECO:0000255" key="2"/>
<evidence type="ECO:0000255" key="3">
    <source>
        <dbReference type="PROSITE-ProRule" id="PRU00274"/>
    </source>
</evidence>
<evidence type="ECO:0000305" key="4"/>
<evidence type="ECO:0000305" key="5">
    <source ref="1"/>
</evidence>
<proteinExistence type="evidence at transcript level"/>
<comment type="function">
    <text evidence="4">Snake venom serine protease homolog that may act in the hemostasis system of the prey.</text>
</comment>
<comment type="subcellular location">
    <subcellularLocation>
        <location evidence="5">Secreted</location>
    </subcellularLocation>
</comment>
<comment type="tissue specificity">
    <text evidence="5">Expressed by the venom gland.</text>
</comment>
<comment type="similarity">
    <text evidence="4">Belongs to the peptidase S1 family. Snake venom subfamily.</text>
</comment>
<comment type="caution">
    <text evidence="4">Lacks the conserved His at position 67, which is expected to be an active site residue.</text>
</comment>
<feature type="signal peptide" evidence="2">
    <location>
        <begin position="1"/>
        <end position="18"/>
    </location>
</feature>
<feature type="propeptide" id="PRO_0000295840" evidence="1">
    <location>
        <begin position="19"/>
        <end position="24"/>
    </location>
</feature>
<feature type="chain" id="PRO_0000295841" description="Snake venom serine protease homolog 1">
    <location>
        <begin position="25"/>
        <end position="260"/>
    </location>
</feature>
<feature type="domain" description="Peptidase S1" evidence="3">
    <location>
        <begin position="25"/>
        <end position="251"/>
    </location>
</feature>
<feature type="glycosylation site" description="N-linked (GlcNAc...) asparagine" evidence="2">
    <location>
        <position position="83"/>
    </location>
</feature>
<feature type="glycosylation site" description="N-linked (GlcNAc...) asparagine" evidence="2">
    <location>
        <position position="123"/>
    </location>
</feature>
<feature type="glycosylation site" description="N-linked (GlcNAc...) asparagine" evidence="2">
    <location>
        <position position="124"/>
    </location>
</feature>
<feature type="disulfide bond" evidence="3">
    <location>
        <begin position="31"/>
        <end position="165"/>
    </location>
</feature>
<feature type="disulfide bond" evidence="3">
    <location>
        <begin position="52"/>
        <end position="68"/>
    </location>
</feature>
<feature type="disulfide bond" evidence="3">
    <location>
        <begin position="100"/>
        <end position="258"/>
    </location>
</feature>
<feature type="disulfide bond" evidence="3">
    <location>
        <begin position="144"/>
        <end position="212"/>
    </location>
</feature>
<feature type="disulfide bond" evidence="3">
    <location>
        <begin position="176"/>
        <end position="191"/>
    </location>
</feature>
<feature type="disulfide bond" evidence="3">
    <location>
        <begin position="202"/>
        <end position="227"/>
    </location>
</feature>
<dbReference type="EMBL" id="AF545575">
    <property type="protein sequence ID" value="AAN52346.1"/>
    <property type="molecule type" value="mRNA"/>
</dbReference>
<dbReference type="SMR" id="Q8AY82"/>
<dbReference type="MEROPS" id="S01.509"/>
<dbReference type="GO" id="GO:0005576">
    <property type="term" value="C:extracellular region"/>
    <property type="evidence" value="ECO:0007669"/>
    <property type="project" value="UniProtKB-SubCell"/>
</dbReference>
<dbReference type="GO" id="GO:0030141">
    <property type="term" value="C:secretory granule"/>
    <property type="evidence" value="ECO:0007669"/>
    <property type="project" value="TreeGrafter"/>
</dbReference>
<dbReference type="GO" id="GO:0004252">
    <property type="term" value="F:serine-type endopeptidase activity"/>
    <property type="evidence" value="ECO:0007669"/>
    <property type="project" value="InterPro"/>
</dbReference>
<dbReference type="GO" id="GO:0090729">
    <property type="term" value="F:toxin activity"/>
    <property type="evidence" value="ECO:0007669"/>
    <property type="project" value="UniProtKB-KW"/>
</dbReference>
<dbReference type="GO" id="GO:0006508">
    <property type="term" value="P:proteolysis"/>
    <property type="evidence" value="ECO:0007669"/>
    <property type="project" value="InterPro"/>
</dbReference>
<dbReference type="CDD" id="cd00190">
    <property type="entry name" value="Tryp_SPc"/>
    <property type="match status" value="1"/>
</dbReference>
<dbReference type="FunFam" id="2.40.10.10:FF:000158">
    <property type="entry name" value="Thrombin-like enzyme saxthrombin"/>
    <property type="match status" value="1"/>
</dbReference>
<dbReference type="FunFam" id="2.40.10.10:FF:000153">
    <property type="entry name" value="Venom plasminogen activator TSV-PA"/>
    <property type="match status" value="1"/>
</dbReference>
<dbReference type="Gene3D" id="2.40.10.10">
    <property type="entry name" value="Trypsin-like serine proteases"/>
    <property type="match status" value="2"/>
</dbReference>
<dbReference type="InterPro" id="IPR009003">
    <property type="entry name" value="Peptidase_S1_PA"/>
</dbReference>
<dbReference type="InterPro" id="IPR043504">
    <property type="entry name" value="Peptidase_S1_PA_chymotrypsin"/>
</dbReference>
<dbReference type="InterPro" id="IPR001314">
    <property type="entry name" value="Peptidase_S1A"/>
</dbReference>
<dbReference type="InterPro" id="IPR001254">
    <property type="entry name" value="Trypsin_dom"/>
</dbReference>
<dbReference type="InterPro" id="IPR033116">
    <property type="entry name" value="TRYPSIN_SER"/>
</dbReference>
<dbReference type="PANTHER" id="PTHR24271:SF47">
    <property type="entry name" value="KALLIKREIN-1"/>
    <property type="match status" value="1"/>
</dbReference>
<dbReference type="PANTHER" id="PTHR24271">
    <property type="entry name" value="KALLIKREIN-RELATED"/>
    <property type="match status" value="1"/>
</dbReference>
<dbReference type="Pfam" id="PF00089">
    <property type="entry name" value="Trypsin"/>
    <property type="match status" value="1"/>
</dbReference>
<dbReference type="PRINTS" id="PR00722">
    <property type="entry name" value="CHYMOTRYPSIN"/>
</dbReference>
<dbReference type="SMART" id="SM00020">
    <property type="entry name" value="Tryp_SPc"/>
    <property type="match status" value="1"/>
</dbReference>
<dbReference type="SUPFAM" id="SSF50494">
    <property type="entry name" value="Trypsin-like serine proteases"/>
    <property type="match status" value="1"/>
</dbReference>
<dbReference type="PROSITE" id="PS50240">
    <property type="entry name" value="TRYPSIN_DOM"/>
    <property type="match status" value="1"/>
</dbReference>
<dbReference type="PROSITE" id="PS00135">
    <property type="entry name" value="TRYPSIN_SER"/>
    <property type="match status" value="1"/>
</dbReference>
<name>VSPH1_TRIST</name>
<organism>
    <name type="scientific">Trimeresurus stejnegeri</name>
    <name type="common">Chinese green tree viper</name>
    <name type="synonym">Viridovipera stejnegeri</name>
    <dbReference type="NCBI Taxonomy" id="39682"/>
    <lineage>
        <taxon>Eukaryota</taxon>
        <taxon>Metazoa</taxon>
        <taxon>Chordata</taxon>
        <taxon>Craniata</taxon>
        <taxon>Vertebrata</taxon>
        <taxon>Euteleostomi</taxon>
        <taxon>Lepidosauria</taxon>
        <taxon>Squamata</taxon>
        <taxon>Bifurcata</taxon>
        <taxon>Unidentata</taxon>
        <taxon>Episquamata</taxon>
        <taxon>Toxicofera</taxon>
        <taxon>Serpentes</taxon>
        <taxon>Colubroidea</taxon>
        <taxon>Viperidae</taxon>
        <taxon>Crotalinae</taxon>
        <taxon>Trimeresurus</taxon>
    </lineage>
</organism>
<protein>
    <recommendedName>
        <fullName>Snake venom serine protease homolog 1</fullName>
    </recommendedName>
    <alternativeName>
        <fullName>Serine proteinase-like protein 1</fullName>
    </alternativeName>
</protein>
<accession>Q8AY82</accession>
<sequence>MVLIRVLANLLILQLSYAQKSSELIIGGDECNINEHRFLVALYTFRSRRFHCSGTLINQEWVLSAARCDRKNIRIKLGMHSTNVTNEDVQTRVPKEKFFCLSSKTYTKWNKDIMLIRLKRPVNNSTHIAPVSLPSNPPSLGSVCRVMGWGTISATKETHPDVPHCANINILDYSVCRAAYARLPATSRTLCAGILEGGKDTCHGDSGGPLICNGQVQGIVSWGGHPCGLPRKPGLYTKVFDHLDWIKSIIAGNKDATCPP</sequence>
<reference key="1">
    <citation type="submission" date="2002-09" db="EMBL/GenBank/DDBJ databases">
        <title>Molecular cloning and sequence comparison of serine proteases from the venom of Trimeresurus stejnegeri.</title>
        <authorList>
            <person name="Lee W.-H."/>
            <person name="Zhang Y."/>
        </authorList>
    </citation>
    <scope>NUCLEOTIDE SEQUENCE [MRNA]</scope>
    <source>
        <tissue>Venom gland</tissue>
    </source>
</reference>